<comment type="function">
    <text>May stabilize HDL (high density lipoprotein) structure by its association with lipids, and affect the HDL metabolism. Has antimicrobial activity.</text>
</comment>
<comment type="subunit">
    <text evidence="2">Monomer. Interacts with NAXE and NDRG1 (By similarity).</text>
</comment>
<comment type="subcellular location">
    <subcellularLocation>
        <location evidence="2">Secreted</location>
    </subcellularLocation>
</comment>
<comment type="tissue specificity">
    <text>Plasma.</text>
</comment>
<comment type="mass spectrometry">
    <molecule>Truncated apolipoprotein A-II</molecule>
</comment>
<comment type="similarity">
    <text evidence="4">Belongs to the apolipoprotein A2 family.</text>
</comment>
<feature type="signal peptide" evidence="1">
    <location>
        <begin position="1"/>
        <end position="18"/>
    </location>
</feature>
<feature type="chain" id="PRO_0000425349" description="Proapolipoprotein A-II">
    <location>
        <begin position="19"/>
        <end position="100"/>
    </location>
</feature>
<feature type="chain" id="PRO_0000181373" description="Apolipoprotein A-II">
    <location>
        <begin position="24"/>
        <end position="100"/>
    </location>
</feature>
<feature type="chain" id="PRO_0000244388" description="Truncated apolipoprotein A-II" evidence="3">
    <location>
        <begin position="24"/>
        <end position="99"/>
    </location>
</feature>
<feature type="modified residue" description="Pyrrolidone carboxylic acid" evidence="3">
    <location>
        <position position="24"/>
    </location>
</feature>
<accession>P81644</accession>
<accession>Q2NKV9</accession>
<reference key="1">
    <citation type="submission" date="2006-01" db="EMBL/GenBank/DDBJ databases">
        <authorList>
            <consortium name="NIH - Mammalian Gene Collection (MGC) project"/>
        </authorList>
    </citation>
    <scope>NUCLEOTIDE SEQUENCE [LARGE SCALE MRNA]</scope>
    <source>
        <strain>Hereford</strain>
        <tissue>Testis</tissue>
    </source>
</reference>
<reference key="2">
    <citation type="journal article" date="1998" name="J. Biochem.">
        <title>Purification, primary structure, and antimicrobial activities of bovine apolipoprotein A-II.</title>
        <authorList>
            <person name="Motizuki M."/>
            <person name="Itoh T."/>
            <person name="Yamada M."/>
            <person name="Shimamura S."/>
            <person name="Tsurugi K."/>
        </authorList>
    </citation>
    <scope>PROTEIN SEQUENCE OF 24-99</scope>
    <scope>MASS SPECTROMETRY</scope>
    <scope>PYROGLUTAMATE FORMATION AT GLN-24</scope>
    <source>
        <tissue>Fetal serum</tissue>
    </source>
</reference>
<organism>
    <name type="scientific">Bos taurus</name>
    <name type="common">Bovine</name>
    <dbReference type="NCBI Taxonomy" id="9913"/>
    <lineage>
        <taxon>Eukaryota</taxon>
        <taxon>Metazoa</taxon>
        <taxon>Chordata</taxon>
        <taxon>Craniata</taxon>
        <taxon>Vertebrata</taxon>
        <taxon>Euteleostomi</taxon>
        <taxon>Mammalia</taxon>
        <taxon>Eutheria</taxon>
        <taxon>Laurasiatheria</taxon>
        <taxon>Artiodactyla</taxon>
        <taxon>Ruminantia</taxon>
        <taxon>Pecora</taxon>
        <taxon>Bovidae</taxon>
        <taxon>Bovinae</taxon>
        <taxon>Bos</taxon>
    </lineage>
</organism>
<name>APOA2_BOVIN</name>
<sequence>MKLLALTVLLLTICGLEGALVRRQAEESNLQSLVSQYFQTVADYGKDLVEKAKGSELQTQAKAYFEKTQEELTPFFKKAGTDLLNFLSSFIDPKKQPATR</sequence>
<dbReference type="EMBL" id="BC111607">
    <property type="protein sequence ID" value="AAI11608.1"/>
    <property type="molecule type" value="mRNA"/>
</dbReference>
<dbReference type="PIR" id="JC5734">
    <property type="entry name" value="JC5734"/>
</dbReference>
<dbReference type="RefSeq" id="NP_001039381.1">
    <property type="nucleotide sequence ID" value="NM_001045916.2"/>
</dbReference>
<dbReference type="SMR" id="P81644"/>
<dbReference type="FunCoup" id="P81644">
    <property type="interactions" value="285"/>
</dbReference>
<dbReference type="STRING" id="9913.ENSBTAP00000012138"/>
<dbReference type="PaxDb" id="9913-ENSBTAP00000012138"/>
<dbReference type="PeptideAtlas" id="P81644"/>
<dbReference type="Ensembl" id="ENSBTAT00000012138.4">
    <property type="protein sequence ID" value="ENSBTAP00000012138.3"/>
    <property type="gene ID" value="ENSBTAG00000009212.4"/>
</dbReference>
<dbReference type="GeneID" id="505394"/>
<dbReference type="KEGG" id="bta:505394"/>
<dbReference type="CTD" id="336"/>
<dbReference type="VEuPathDB" id="HostDB:ENSBTAG00000009212"/>
<dbReference type="VGNC" id="VGNC:26023">
    <property type="gene designation" value="APOA2"/>
</dbReference>
<dbReference type="eggNOG" id="ENOG502SVYZ">
    <property type="taxonomic scope" value="Eukaryota"/>
</dbReference>
<dbReference type="GeneTree" id="ENSGT00390000003306"/>
<dbReference type="HOGENOM" id="CLU_157351_0_0_1"/>
<dbReference type="InParanoid" id="P81644"/>
<dbReference type="OMA" id="LTICSFE"/>
<dbReference type="OrthoDB" id="9450770at2759"/>
<dbReference type="TreeFam" id="TF338165"/>
<dbReference type="Reactome" id="R-BTA-381426">
    <property type="pathway name" value="Regulation of Insulin-like Growth Factor (IGF) transport and uptake by Insulin-like Growth Factor Binding Proteins (IGFBPs)"/>
</dbReference>
<dbReference type="Reactome" id="R-BTA-8957275">
    <property type="pathway name" value="Post-translational protein phosphorylation"/>
</dbReference>
<dbReference type="Reactome" id="R-BTA-8963888">
    <property type="pathway name" value="Chylomicron assembly"/>
</dbReference>
<dbReference type="Reactome" id="R-BTA-8963901">
    <property type="pathway name" value="Chylomicron remodeling"/>
</dbReference>
<dbReference type="Reactome" id="R-BTA-975634">
    <property type="pathway name" value="Retinoid metabolism and transport"/>
</dbReference>
<dbReference type="Proteomes" id="UP000009136">
    <property type="component" value="Chromosome 3"/>
</dbReference>
<dbReference type="Bgee" id="ENSBTAG00000009212">
    <property type="expression patterns" value="Expressed in liver and 57 other cell types or tissues"/>
</dbReference>
<dbReference type="GO" id="GO:0042627">
    <property type="term" value="C:chylomicron"/>
    <property type="evidence" value="ECO:0007669"/>
    <property type="project" value="Ensembl"/>
</dbReference>
<dbReference type="GO" id="GO:0034366">
    <property type="term" value="C:spherical high-density lipoprotein particle"/>
    <property type="evidence" value="ECO:0000318"/>
    <property type="project" value="GO_Central"/>
</dbReference>
<dbReference type="GO" id="GO:0034361">
    <property type="term" value="C:very-low-density lipoprotein particle"/>
    <property type="evidence" value="ECO:0007669"/>
    <property type="project" value="Ensembl"/>
</dbReference>
<dbReference type="GO" id="GO:0034190">
    <property type="term" value="F:apolipoprotein receptor binding"/>
    <property type="evidence" value="ECO:0007669"/>
    <property type="project" value="Ensembl"/>
</dbReference>
<dbReference type="GO" id="GO:0015485">
    <property type="term" value="F:cholesterol binding"/>
    <property type="evidence" value="ECO:0007669"/>
    <property type="project" value="Ensembl"/>
</dbReference>
<dbReference type="GO" id="GO:0120020">
    <property type="term" value="F:cholesterol transfer activity"/>
    <property type="evidence" value="ECO:0007669"/>
    <property type="project" value="Ensembl"/>
</dbReference>
<dbReference type="GO" id="GO:0019899">
    <property type="term" value="F:enzyme binding"/>
    <property type="evidence" value="ECO:0007669"/>
    <property type="project" value="Ensembl"/>
</dbReference>
<dbReference type="GO" id="GO:0031072">
    <property type="term" value="F:heat shock protein binding"/>
    <property type="evidence" value="ECO:0007669"/>
    <property type="project" value="Ensembl"/>
</dbReference>
<dbReference type="GO" id="GO:0008035">
    <property type="term" value="F:high-density lipoprotein particle binding"/>
    <property type="evidence" value="ECO:0000318"/>
    <property type="project" value="GO_Central"/>
</dbReference>
<dbReference type="GO" id="GO:0070653">
    <property type="term" value="F:high-density lipoprotein particle receptor binding"/>
    <property type="evidence" value="ECO:0007669"/>
    <property type="project" value="Ensembl"/>
</dbReference>
<dbReference type="GO" id="GO:0055102">
    <property type="term" value="F:lipase inhibitor activity"/>
    <property type="evidence" value="ECO:0007669"/>
    <property type="project" value="Ensembl"/>
</dbReference>
<dbReference type="GO" id="GO:0031210">
    <property type="term" value="F:phosphatidylcholine binding"/>
    <property type="evidence" value="ECO:0007669"/>
    <property type="project" value="Ensembl"/>
</dbReference>
<dbReference type="GO" id="GO:0060228">
    <property type="term" value="F:phosphatidylcholine-sterol O-acyltransferase activator activity"/>
    <property type="evidence" value="ECO:0007669"/>
    <property type="project" value="Ensembl"/>
</dbReference>
<dbReference type="GO" id="GO:0046982">
    <property type="term" value="F:protein heterodimerization activity"/>
    <property type="evidence" value="ECO:0000250"/>
    <property type="project" value="UniProtKB"/>
</dbReference>
<dbReference type="GO" id="GO:0042803">
    <property type="term" value="F:protein homodimerization activity"/>
    <property type="evidence" value="ECO:0007669"/>
    <property type="project" value="Ensembl"/>
</dbReference>
<dbReference type="GO" id="GO:0048018">
    <property type="term" value="F:receptor ligand activity"/>
    <property type="evidence" value="ECO:0007669"/>
    <property type="project" value="Ensembl"/>
</dbReference>
<dbReference type="GO" id="GO:0017129">
    <property type="term" value="F:triglyceride binding"/>
    <property type="evidence" value="ECO:0000303"/>
    <property type="project" value="UniProtKB"/>
</dbReference>
<dbReference type="GO" id="GO:0071402">
    <property type="term" value="P:cellular response to lipoprotein particle stimulus"/>
    <property type="evidence" value="ECO:0007669"/>
    <property type="project" value="Ensembl"/>
</dbReference>
<dbReference type="GO" id="GO:0033344">
    <property type="term" value="P:cholesterol efflux"/>
    <property type="evidence" value="ECO:0007669"/>
    <property type="project" value="Ensembl"/>
</dbReference>
<dbReference type="GO" id="GO:0042632">
    <property type="term" value="P:cholesterol homeostasis"/>
    <property type="evidence" value="ECO:0000318"/>
    <property type="project" value="GO_Central"/>
</dbReference>
<dbReference type="GO" id="GO:0008203">
    <property type="term" value="P:cholesterol metabolic process"/>
    <property type="evidence" value="ECO:0007669"/>
    <property type="project" value="Ensembl"/>
</dbReference>
<dbReference type="GO" id="GO:0030301">
    <property type="term" value="P:cholesterol transport"/>
    <property type="evidence" value="ECO:0000318"/>
    <property type="project" value="GO_Central"/>
</dbReference>
<dbReference type="GO" id="GO:0042742">
    <property type="term" value="P:defense response to bacterium"/>
    <property type="evidence" value="ECO:0007669"/>
    <property type="project" value="UniProtKB-KW"/>
</dbReference>
<dbReference type="GO" id="GO:0046340">
    <property type="term" value="P:diacylglycerol catabolic process"/>
    <property type="evidence" value="ECO:0007669"/>
    <property type="project" value="Ensembl"/>
</dbReference>
<dbReference type="GO" id="GO:0034380">
    <property type="term" value="P:high-density lipoprotein particle assembly"/>
    <property type="evidence" value="ECO:0007669"/>
    <property type="project" value="Ensembl"/>
</dbReference>
<dbReference type="GO" id="GO:0034384">
    <property type="term" value="P:high-density lipoprotein particle clearance"/>
    <property type="evidence" value="ECO:0007669"/>
    <property type="project" value="Ensembl"/>
</dbReference>
<dbReference type="GO" id="GO:0034375">
    <property type="term" value="P:high-density lipoprotein particle remodeling"/>
    <property type="evidence" value="ECO:0007669"/>
    <property type="project" value="Ensembl"/>
</dbReference>
<dbReference type="GO" id="GO:0042157">
    <property type="term" value="P:lipoprotein metabolic process"/>
    <property type="evidence" value="ECO:0007669"/>
    <property type="project" value="Ensembl"/>
</dbReference>
<dbReference type="GO" id="GO:0034374">
    <property type="term" value="P:low-density lipoprotein particle remodeling"/>
    <property type="evidence" value="ECO:0007669"/>
    <property type="project" value="Ensembl"/>
</dbReference>
<dbReference type="GO" id="GO:0060621">
    <property type="term" value="P:negative regulation of cholesterol import"/>
    <property type="evidence" value="ECO:0007669"/>
    <property type="project" value="Ensembl"/>
</dbReference>
<dbReference type="GO" id="GO:0002719">
    <property type="term" value="P:negative regulation of cytokine production involved in immune response"/>
    <property type="evidence" value="ECO:0007669"/>
    <property type="project" value="Ensembl"/>
</dbReference>
<dbReference type="GO" id="GO:0050995">
    <property type="term" value="P:negative regulation of lipid catabolic process"/>
    <property type="evidence" value="ECO:0007669"/>
    <property type="project" value="Ensembl"/>
</dbReference>
<dbReference type="GO" id="GO:0010903">
    <property type="term" value="P:negative regulation of very-low-density lipoprotein particle remodeling"/>
    <property type="evidence" value="ECO:0007669"/>
    <property type="project" value="Ensembl"/>
</dbReference>
<dbReference type="GO" id="GO:0006656">
    <property type="term" value="P:phosphatidylcholine biosynthetic process"/>
    <property type="evidence" value="ECO:0007669"/>
    <property type="project" value="Ensembl"/>
</dbReference>
<dbReference type="GO" id="GO:0009395">
    <property type="term" value="P:phospholipid catabolic process"/>
    <property type="evidence" value="ECO:0007669"/>
    <property type="project" value="Ensembl"/>
</dbReference>
<dbReference type="GO" id="GO:0033700">
    <property type="term" value="P:phospholipid efflux"/>
    <property type="evidence" value="ECO:0007669"/>
    <property type="project" value="Ensembl"/>
</dbReference>
<dbReference type="GO" id="GO:0032757">
    <property type="term" value="P:positive regulation of interleukin-8 production"/>
    <property type="evidence" value="ECO:0000250"/>
    <property type="project" value="UniProtKB"/>
</dbReference>
<dbReference type="GO" id="GO:0050996">
    <property type="term" value="P:positive regulation of lipid catabolic process"/>
    <property type="evidence" value="ECO:0007669"/>
    <property type="project" value="Ensembl"/>
</dbReference>
<dbReference type="GO" id="GO:0050766">
    <property type="term" value="P:positive regulation of phagocytosis"/>
    <property type="evidence" value="ECO:0000250"/>
    <property type="project" value="UniProtKB"/>
</dbReference>
<dbReference type="GO" id="GO:0050821">
    <property type="term" value="P:protein stabilization"/>
    <property type="evidence" value="ECO:0000250"/>
    <property type="project" value="UniProtKB"/>
</dbReference>
<dbReference type="GO" id="GO:0030300">
    <property type="term" value="P:regulation of intestinal cholesterol absorption"/>
    <property type="evidence" value="ECO:0007669"/>
    <property type="project" value="Ensembl"/>
</dbReference>
<dbReference type="GO" id="GO:0009749">
    <property type="term" value="P:response to glucose"/>
    <property type="evidence" value="ECO:0007669"/>
    <property type="project" value="Ensembl"/>
</dbReference>
<dbReference type="GO" id="GO:0043691">
    <property type="term" value="P:reverse cholesterol transport"/>
    <property type="evidence" value="ECO:0007669"/>
    <property type="project" value="Ensembl"/>
</dbReference>
<dbReference type="GO" id="GO:0034370">
    <property type="term" value="P:triglyceride-rich lipoprotein particle remodeling"/>
    <property type="evidence" value="ECO:0007669"/>
    <property type="project" value="Ensembl"/>
</dbReference>
<dbReference type="Gene3D" id="6.10.250.100">
    <property type="match status" value="1"/>
</dbReference>
<dbReference type="InterPro" id="IPR006801">
    <property type="entry name" value="ApoA-II"/>
</dbReference>
<dbReference type="InterPro" id="IPR036172">
    <property type="entry name" value="ApoA-II_sf"/>
</dbReference>
<dbReference type="PANTHER" id="PTHR11027">
    <property type="entry name" value="APOLIPOPROTEIN A-II"/>
    <property type="match status" value="1"/>
</dbReference>
<dbReference type="PANTHER" id="PTHR11027:SF0">
    <property type="entry name" value="APOLIPOPROTEIN A-II"/>
    <property type="match status" value="1"/>
</dbReference>
<dbReference type="Pfam" id="PF04711">
    <property type="entry name" value="ApoA-II"/>
    <property type="match status" value="1"/>
</dbReference>
<dbReference type="SUPFAM" id="SSF82936">
    <property type="entry name" value="Apolipoprotein A-II"/>
    <property type="match status" value="1"/>
</dbReference>
<protein>
    <recommendedName>
        <fullName>Apolipoprotein A-II</fullName>
        <shortName>Apo-AII</shortName>
        <shortName>ApoA-II</shortName>
    </recommendedName>
    <alternativeName>
        <fullName>Antimicrobial peptide BAMP-1</fullName>
    </alternativeName>
    <alternativeName>
        <fullName>Apolipoprotein A2</fullName>
    </alternativeName>
    <component>
        <recommendedName>
            <fullName>Proapolipoprotein A-II</fullName>
            <shortName>ProapoA-II</shortName>
        </recommendedName>
    </component>
    <component>
        <recommendedName>
            <fullName>Truncated apolipoprotein A-II</fullName>
        </recommendedName>
        <alternativeName>
            <fullName>Apolipoprotein A-II(1-76)</fullName>
        </alternativeName>
    </component>
</protein>
<gene>
    <name type="primary">APOA2</name>
</gene>
<evidence type="ECO:0000250" key="1"/>
<evidence type="ECO:0000250" key="2">
    <source>
        <dbReference type="UniProtKB" id="P02652"/>
    </source>
</evidence>
<evidence type="ECO:0000269" key="3">
    <source>
    </source>
</evidence>
<evidence type="ECO:0000305" key="4"/>
<keyword id="KW-0044">Antibiotic</keyword>
<keyword id="KW-0929">Antimicrobial</keyword>
<keyword id="KW-0165">Cleavage on pair of basic residues</keyword>
<keyword id="KW-0903">Direct protein sequencing</keyword>
<keyword id="KW-0345">HDL</keyword>
<keyword id="KW-0445">Lipid transport</keyword>
<keyword id="KW-0873">Pyrrolidone carboxylic acid</keyword>
<keyword id="KW-1185">Reference proteome</keyword>
<keyword id="KW-0964">Secreted</keyword>
<keyword id="KW-0732">Signal</keyword>
<keyword id="KW-0813">Transport</keyword>
<proteinExistence type="evidence at protein level"/>